<accession>A8L8T2</accession>
<protein>
    <recommendedName>
        <fullName evidence="1">Small ribosomal subunit protein bS18</fullName>
    </recommendedName>
    <alternativeName>
        <fullName evidence="2">30S ribosomal protein S18</fullName>
    </alternativeName>
</protein>
<comment type="function">
    <text evidence="1">Binds as a heterodimer with protein bS6 to the central domain of the 16S rRNA, where it helps stabilize the platform of the 30S subunit.</text>
</comment>
<comment type="subunit">
    <text evidence="1">Part of the 30S ribosomal subunit. Forms a tight heterodimer with protein bS6.</text>
</comment>
<comment type="similarity">
    <text evidence="1">Belongs to the bacterial ribosomal protein bS18 family.</text>
</comment>
<dbReference type="EMBL" id="CP000820">
    <property type="protein sequence ID" value="ABW16629.1"/>
    <property type="molecule type" value="Genomic_DNA"/>
</dbReference>
<dbReference type="RefSeq" id="WP_006543269.1">
    <property type="nucleotide sequence ID" value="NC_009921.1"/>
</dbReference>
<dbReference type="SMR" id="A8L8T2"/>
<dbReference type="STRING" id="298653.Franean1_7310"/>
<dbReference type="KEGG" id="fre:Franean1_7310"/>
<dbReference type="eggNOG" id="COG0238">
    <property type="taxonomic scope" value="Bacteria"/>
</dbReference>
<dbReference type="HOGENOM" id="CLU_148710_2_2_11"/>
<dbReference type="GO" id="GO:0022627">
    <property type="term" value="C:cytosolic small ribosomal subunit"/>
    <property type="evidence" value="ECO:0007669"/>
    <property type="project" value="TreeGrafter"/>
</dbReference>
<dbReference type="GO" id="GO:0070181">
    <property type="term" value="F:small ribosomal subunit rRNA binding"/>
    <property type="evidence" value="ECO:0007669"/>
    <property type="project" value="TreeGrafter"/>
</dbReference>
<dbReference type="GO" id="GO:0003735">
    <property type="term" value="F:structural constituent of ribosome"/>
    <property type="evidence" value="ECO:0007669"/>
    <property type="project" value="InterPro"/>
</dbReference>
<dbReference type="GO" id="GO:0006412">
    <property type="term" value="P:translation"/>
    <property type="evidence" value="ECO:0007669"/>
    <property type="project" value="UniProtKB-UniRule"/>
</dbReference>
<dbReference type="FunFam" id="4.10.640.10:FF:000004">
    <property type="entry name" value="30S ribosomal protein S18"/>
    <property type="match status" value="1"/>
</dbReference>
<dbReference type="Gene3D" id="4.10.640.10">
    <property type="entry name" value="Ribosomal protein S18"/>
    <property type="match status" value="1"/>
</dbReference>
<dbReference type="HAMAP" id="MF_00270">
    <property type="entry name" value="Ribosomal_bS18"/>
    <property type="match status" value="1"/>
</dbReference>
<dbReference type="InterPro" id="IPR001648">
    <property type="entry name" value="Ribosomal_bS18"/>
</dbReference>
<dbReference type="InterPro" id="IPR018275">
    <property type="entry name" value="Ribosomal_bS18_CS"/>
</dbReference>
<dbReference type="InterPro" id="IPR036870">
    <property type="entry name" value="Ribosomal_bS18_sf"/>
</dbReference>
<dbReference type="NCBIfam" id="TIGR00165">
    <property type="entry name" value="S18"/>
    <property type="match status" value="1"/>
</dbReference>
<dbReference type="PANTHER" id="PTHR13479">
    <property type="entry name" value="30S RIBOSOMAL PROTEIN S18"/>
    <property type="match status" value="1"/>
</dbReference>
<dbReference type="PANTHER" id="PTHR13479:SF62">
    <property type="entry name" value="SMALL RIBOSOMAL SUBUNIT PROTEIN BS18A"/>
    <property type="match status" value="1"/>
</dbReference>
<dbReference type="Pfam" id="PF01084">
    <property type="entry name" value="Ribosomal_S18"/>
    <property type="match status" value="1"/>
</dbReference>
<dbReference type="PRINTS" id="PR00974">
    <property type="entry name" value="RIBOSOMALS18"/>
</dbReference>
<dbReference type="SUPFAM" id="SSF46911">
    <property type="entry name" value="Ribosomal protein S18"/>
    <property type="match status" value="1"/>
</dbReference>
<dbReference type="PROSITE" id="PS00057">
    <property type="entry name" value="RIBOSOMAL_S18"/>
    <property type="match status" value="1"/>
</dbReference>
<sequence length="78" mass="8957">MAKAAVRKPKKKVCVFCKDKVHYIDYKDTSLLRKFISDRGKIRARRVTGNCSQHQRDVATAVKNSREMALLPYTSTAR</sequence>
<proteinExistence type="inferred from homology"/>
<evidence type="ECO:0000255" key="1">
    <source>
        <dbReference type="HAMAP-Rule" id="MF_00270"/>
    </source>
</evidence>
<evidence type="ECO:0000305" key="2"/>
<gene>
    <name evidence="1" type="primary">rpsR</name>
    <name type="ordered locus">Franean1_7310</name>
</gene>
<feature type="chain" id="PRO_1000114422" description="Small ribosomal subunit protein bS18">
    <location>
        <begin position="1"/>
        <end position="78"/>
    </location>
</feature>
<reference key="1">
    <citation type="journal article" date="2007" name="Genome Res.">
        <title>Genome characteristics of facultatively symbiotic Frankia sp. strains reflect host range and host plant biogeography.</title>
        <authorList>
            <person name="Normand P."/>
            <person name="Lapierre P."/>
            <person name="Tisa L.S."/>
            <person name="Gogarten J.P."/>
            <person name="Alloisio N."/>
            <person name="Bagnarol E."/>
            <person name="Bassi C.A."/>
            <person name="Berry A.M."/>
            <person name="Bickhart D.M."/>
            <person name="Choisne N."/>
            <person name="Couloux A."/>
            <person name="Cournoyer B."/>
            <person name="Cruveiller S."/>
            <person name="Daubin V."/>
            <person name="Demange N."/>
            <person name="Francino M.P."/>
            <person name="Goltsman E."/>
            <person name="Huang Y."/>
            <person name="Kopp O.R."/>
            <person name="Labarre L."/>
            <person name="Lapidus A."/>
            <person name="Lavire C."/>
            <person name="Marechal J."/>
            <person name="Martinez M."/>
            <person name="Mastronunzio J.E."/>
            <person name="Mullin B.C."/>
            <person name="Niemann J."/>
            <person name="Pujic P."/>
            <person name="Rawnsley T."/>
            <person name="Rouy Z."/>
            <person name="Schenowitz C."/>
            <person name="Sellstedt A."/>
            <person name="Tavares F."/>
            <person name="Tomkins J.P."/>
            <person name="Vallenet D."/>
            <person name="Valverde C."/>
            <person name="Wall L.G."/>
            <person name="Wang Y."/>
            <person name="Medigue C."/>
            <person name="Benson D.R."/>
        </authorList>
    </citation>
    <scope>NUCLEOTIDE SEQUENCE [LARGE SCALE GENOMIC DNA]</scope>
    <source>
        <strain>EAN1pec</strain>
    </source>
</reference>
<name>RS18_PARS2</name>
<organism>
    <name type="scientific">Parafrankia sp. (strain EAN1pec)</name>
    <dbReference type="NCBI Taxonomy" id="298653"/>
    <lineage>
        <taxon>Bacteria</taxon>
        <taxon>Bacillati</taxon>
        <taxon>Actinomycetota</taxon>
        <taxon>Actinomycetes</taxon>
        <taxon>Frankiales</taxon>
        <taxon>Frankiaceae</taxon>
        <taxon>Parafrankia</taxon>
    </lineage>
</organism>
<keyword id="KW-0687">Ribonucleoprotein</keyword>
<keyword id="KW-0689">Ribosomal protein</keyword>
<keyword id="KW-0694">RNA-binding</keyword>
<keyword id="KW-0699">rRNA-binding</keyword>